<protein>
    <recommendedName>
        <fullName evidence="1">Iron-sulfur cluster assembly protein CyaY</fullName>
    </recommendedName>
</protein>
<gene>
    <name evidence="1" type="primary">cyaY</name>
    <name type="ordered locus">RPR_04540</name>
</gene>
<keyword id="KW-0408">Iron</keyword>
<keyword id="KW-0479">Metal-binding</keyword>
<sequence length="103" mass="11644">MNNSEFSKIAETTIAYIAEKIEEQDKEASIDVDLQGDILNLDTDKGVYVINKQSAAKEIWLSSPVSGPYHFCYEQGKWTNRAGLELMAILTEELNIKFDTRPT</sequence>
<name>CYAY_RICPU</name>
<dbReference type="EMBL" id="CP001227">
    <property type="protein sequence ID" value="ACR47577.1"/>
    <property type="molecule type" value="Genomic_DNA"/>
</dbReference>
<dbReference type="RefSeq" id="WP_012736797.1">
    <property type="nucleotide sequence ID" value="NC_012730.1"/>
</dbReference>
<dbReference type="SMR" id="C4K1X9"/>
<dbReference type="KEGG" id="rpk:RPR_04540"/>
<dbReference type="HOGENOM" id="CLU_080880_4_1_5"/>
<dbReference type="Proteomes" id="UP000005015">
    <property type="component" value="Chromosome"/>
</dbReference>
<dbReference type="GO" id="GO:0005737">
    <property type="term" value="C:cytoplasm"/>
    <property type="evidence" value="ECO:0007669"/>
    <property type="project" value="UniProtKB-ARBA"/>
</dbReference>
<dbReference type="GO" id="GO:0051537">
    <property type="term" value="F:2 iron, 2 sulfur cluster binding"/>
    <property type="evidence" value="ECO:0007669"/>
    <property type="project" value="TreeGrafter"/>
</dbReference>
<dbReference type="GO" id="GO:0008199">
    <property type="term" value="F:ferric iron binding"/>
    <property type="evidence" value="ECO:0007669"/>
    <property type="project" value="InterPro"/>
</dbReference>
<dbReference type="GO" id="GO:0008198">
    <property type="term" value="F:ferrous iron binding"/>
    <property type="evidence" value="ECO:0007669"/>
    <property type="project" value="TreeGrafter"/>
</dbReference>
<dbReference type="GO" id="GO:0004322">
    <property type="term" value="F:ferroxidase activity"/>
    <property type="evidence" value="ECO:0007669"/>
    <property type="project" value="TreeGrafter"/>
</dbReference>
<dbReference type="GO" id="GO:0034986">
    <property type="term" value="F:iron chaperone activity"/>
    <property type="evidence" value="ECO:0007669"/>
    <property type="project" value="TreeGrafter"/>
</dbReference>
<dbReference type="GO" id="GO:0006879">
    <property type="term" value="P:intracellular iron ion homeostasis"/>
    <property type="evidence" value="ECO:0007669"/>
    <property type="project" value="TreeGrafter"/>
</dbReference>
<dbReference type="GO" id="GO:0016226">
    <property type="term" value="P:iron-sulfur cluster assembly"/>
    <property type="evidence" value="ECO:0007669"/>
    <property type="project" value="UniProtKB-UniRule"/>
</dbReference>
<dbReference type="Gene3D" id="3.30.920.10">
    <property type="entry name" value="Frataxin/CyaY"/>
    <property type="match status" value="1"/>
</dbReference>
<dbReference type="HAMAP" id="MF_00142">
    <property type="entry name" value="CyaY"/>
    <property type="match status" value="1"/>
</dbReference>
<dbReference type="InterPro" id="IPR047584">
    <property type="entry name" value="CyaY"/>
</dbReference>
<dbReference type="InterPro" id="IPR002908">
    <property type="entry name" value="Frataxin/CyaY"/>
</dbReference>
<dbReference type="InterPro" id="IPR036524">
    <property type="entry name" value="Frataxin/CyaY_sf"/>
</dbReference>
<dbReference type="InterPro" id="IPR020895">
    <property type="entry name" value="Frataxin_CS"/>
</dbReference>
<dbReference type="NCBIfam" id="TIGR03421">
    <property type="entry name" value="FeS_CyaY"/>
    <property type="match status" value="1"/>
</dbReference>
<dbReference type="PANTHER" id="PTHR16821">
    <property type="entry name" value="FRATAXIN"/>
    <property type="match status" value="1"/>
</dbReference>
<dbReference type="PANTHER" id="PTHR16821:SF2">
    <property type="entry name" value="FRATAXIN, MITOCHONDRIAL"/>
    <property type="match status" value="1"/>
</dbReference>
<dbReference type="Pfam" id="PF01491">
    <property type="entry name" value="Frataxin_Cyay"/>
    <property type="match status" value="1"/>
</dbReference>
<dbReference type="SMART" id="SM01219">
    <property type="entry name" value="Frataxin_Cyay"/>
    <property type="match status" value="1"/>
</dbReference>
<dbReference type="SUPFAM" id="SSF55387">
    <property type="entry name" value="Frataxin/Nqo15-like"/>
    <property type="match status" value="1"/>
</dbReference>
<dbReference type="PROSITE" id="PS01344">
    <property type="entry name" value="FRATAXIN_1"/>
    <property type="match status" value="1"/>
</dbReference>
<dbReference type="PROSITE" id="PS50810">
    <property type="entry name" value="FRATAXIN_2"/>
    <property type="match status" value="1"/>
</dbReference>
<evidence type="ECO:0000255" key="1">
    <source>
        <dbReference type="HAMAP-Rule" id="MF_00142"/>
    </source>
</evidence>
<organism>
    <name type="scientific">Rickettsia peacockii (strain Rustic)</name>
    <dbReference type="NCBI Taxonomy" id="562019"/>
    <lineage>
        <taxon>Bacteria</taxon>
        <taxon>Pseudomonadati</taxon>
        <taxon>Pseudomonadota</taxon>
        <taxon>Alphaproteobacteria</taxon>
        <taxon>Rickettsiales</taxon>
        <taxon>Rickettsiaceae</taxon>
        <taxon>Rickettsieae</taxon>
        <taxon>Rickettsia</taxon>
        <taxon>spotted fever group</taxon>
    </lineage>
</organism>
<reference key="1">
    <citation type="journal article" date="2009" name="PLoS ONE">
        <title>Genome sequence of the endosymbiont Rickettsia peacockii and comparison with virulent Rickettsia rickettsii: identification of virulence factors.</title>
        <authorList>
            <person name="Felsheim R.F."/>
            <person name="Kurtti T.J."/>
            <person name="Munderloh U.G."/>
        </authorList>
    </citation>
    <scope>NUCLEOTIDE SEQUENCE [LARGE SCALE GENOMIC DNA]</scope>
    <source>
        <strain>Rustic</strain>
    </source>
</reference>
<proteinExistence type="inferred from homology"/>
<accession>C4K1X9</accession>
<feature type="chain" id="PRO_1000203290" description="Iron-sulfur cluster assembly protein CyaY">
    <location>
        <begin position="1"/>
        <end position="103"/>
    </location>
</feature>
<comment type="function">
    <text evidence="1">Involved in iron-sulfur (Fe-S) cluster assembly. May act as a regulator of Fe-S biogenesis.</text>
</comment>
<comment type="similarity">
    <text evidence="1">Belongs to the frataxin family.</text>
</comment>